<organism>
    <name type="scientific">Arabidopsis thaliana</name>
    <name type="common">Mouse-ear cress</name>
    <dbReference type="NCBI Taxonomy" id="3702"/>
    <lineage>
        <taxon>Eukaryota</taxon>
        <taxon>Viridiplantae</taxon>
        <taxon>Streptophyta</taxon>
        <taxon>Embryophyta</taxon>
        <taxon>Tracheophyta</taxon>
        <taxon>Spermatophyta</taxon>
        <taxon>Magnoliopsida</taxon>
        <taxon>eudicotyledons</taxon>
        <taxon>Gunneridae</taxon>
        <taxon>Pentapetalae</taxon>
        <taxon>rosids</taxon>
        <taxon>malvids</taxon>
        <taxon>Brassicales</taxon>
        <taxon>Brassicaceae</taxon>
        <taxon>Camelineae</taxon>
        <taxon>Arabidopsis</taxon>
    </lineage>
</organism>
<name>FBW3_ARATH</name>
<protein>
    <recommendedName>
        <fullName>F-box/WD-40 repeat-containing protein At5g21040</fullName>
    </recommendedName>
</protein>
<gene>
    <name type="ordered locus">At5g21040</name>
    <name type="ORF">T10F18.70</name>
</gene>
<accession>Q94AD8</accession>
<reference key="1">
    <citation type="journal article" date="2000" name="Nature">
        <title>Sequence and analysis of chromosome 5 of the plant Arabidopsis thaliana.</title>
        <authorList>
            <person name="Tabata S."/>
            <person name="Kaneko T."/>
            <person name="Nakamura Y."/>
            <person name="Kotani H."/>
            <person name="Kato T."/>
            <person name="Asamizu E."/>
            <person name="Miyajima N."/>
            <person name="Sasamoto S."/>
            <person name="Kimura T."/>
            <person name="Hosouchi T."/>
            <person name="Kawashima K."/>
            <person name="Kohara M."/>
            <person name="Matsumoto M."/>
            <person name="Matsuno A."/>
            <person name="Muraki A."/>
            <person name="Nakayama S."/>
            <person name="Nakazaki N."/>
            <person name="Naruo K."/>
            <person name="Okumura S."/>
            <person name="Shinpo S."/>
            <person name="Takeuchi C."/>
            <person name="Wada T."/>
            <person name="Watanabe A."/>
            <person name="Yamada M."/>
            <person name="Yasuda M."/>
            <person name="Sato S."/>
            <person name="de la Bastide M."/>
            <person name="Huang E."/>
            <person name="Spiegel L."/>
            <person name="Gnoj L."/>
            <person name="O'Shaughnessy A."/>
            <person name="Preston R."/>
            <person name="Habermann K."/>
            <person name="Murray J."/>
            <person name="Johnson D."/>
            <person name="Rohlfing T."/>
            <person name="Nelson J."/>
            <person name="Stoneking T."/>
            <person name="Pepin K."/>
            <person name="Spieth J."/>
            <person name="Sekhon M."/>
            <person name="Armstrong J."/>
            <person name="Becker M."/>
            <person name="Belter E."/>
            <person name="Cordum H."/>
            <person name="Cordes M."/>
            <person name="Courtney L."/>
            <person name="Courtney W."/>
            <person name="Dante M."/>
            <person name="Du H."/>
            <person name="Edwards J."/>
            <person name="Fryman J."/>
            <person name="Haakensen B."/>
            <person name="Lamar E."/>
            <person name="Latreille P."/>
            <person name="Leonard S."/>
            <person name="Meyer R."/>
            <person name="Mulvaney E."/>
            <person name="Ozersky P."/>
            <person name="Riley A."/>
            <person name="Strowmatt C."/>
            <person name="Wagner-McPherson C."/>
            <person name="Wollam A."/>
            <person name="Yoakum M."/>
            <person name="Bell M."/>
            <person name="Dedhia N."/>
            <person name="Parnell L."/>
            <person name="Shah R."/>
            <person name="Rodriguez M."/>
            <person name="Hoon See L."/>
            <person name="Vil D."/>
            <person name="Baker J."/>
            <person name="Kirchoff K."/>
            <person name="Toth K."/>
            <person name="King L."/>
            <person name="Bahret A."/>
            <person name="Miller B."/>
            <person name="Marra M.A."/>
            <person name="Martienssen R."/>
            <person name="McCombie W.R."/>
            <person name="Wilson R.K."/>
            <person name="Murphy G."/>
            <person name="Bancroft I."/>
            <person name="Volckaert G."/>
            <person name="Wambutt R."/>
            <person name="Duesterhoeft A."/>
            <person name="Stiekema W."/>
            <person name="Pohl T."/>
            <person name="Entian K.-D."/>
            <person name="Terryn N."/>
            <person name="Hartley N."/>
            <person name="Bent E."/>
            <person name="Johnson S."/>
            <person name="Langham S.-A."/>
            <person name="McCullagh B."/>
            <person name="Robben J."/>
            <person name="Grymonprez B."/>
            <person name="Zimmermann W."/>
            <person name="Ramsperger U."/>
            <person name="Wedler H."/>
            <person name="Balke K."/>
            <person name="Wedler E."/>
            <person name="Peters S."/>
            <person name="van Staveren M."/>
            <person name="Dirkse W."/>
            <person name="Mooijman P."/>
            <person name="Klein Lankhorst R."/>
            <person name="Weitzenegger T."/>
            <person name="Bothe G."/>
            <person name="Rose M."/>
            <person name="Hauf J."/>
            <person name="Berneiser S."/>
            <person name="Hempel S."/>
            <person name="Feldpausch M."/>
            <person name="Lamberth S."/>
            <person name="Villarroel R."/>
            <person name="Gielen J."/>
            <person name="Ardiles W."/>
            <person name="Bents O."/>
            <person name="Lemcke K."/>
            <person name="Kolesov G."/>
            <person name="Mayer K.F.X."/>
            <person name="Rudd S."/>
            <person name="Schoof H."/>
            <person name="Schueller C."/>
            <person name="Zaccaria P."/>
            <person name="Mewes H.-W."/>
            <person name="Bevan M."/>
            <person name="Fransz P.F."/>
        </authorList>
    </citation>
    <scope>NUCLEOTIDE SEQUENCE [LARGE SCALE GENOMIC DNA]</scope>
    <source>
        <strain>cv. Columbia</strain>
    </source>
</reference>
<reference key="2">
    <citation type="journal article" date="2017" name="Plant J.">
        <title>Araport11: a complete reannotation of the Arabidopsis thaliana reference genome.</title>
        <authorList>
            <person name="Cheng C.Y."/>
            <person name="Krishnakumar V."/>
            <person name="Chan A.P."/>
            <person name="Thibaud-Nissen F."/>
            <person name="Schobel S."/>
            <person name="Town C.D."/>
        </authorList>
    </citation>
    <scope>GENOME REANNOTATION</scope>
    <source>
        <strain>cv. Columbia</strain>
    </source>
</reference>
<reference key="3">
    <citation type="journal article" date="2003" name="Science">
        <title>Empirical analysis of transcriptional activity in the Arabidopsis genome.</title>
        <authorList>
            <person name="Yamada K."/>
            <person name="Lim J."/>
            <person name="Dale J.M."/>
            <person name="Chen H."/>
            <person name="Shinn P."/>
            <person name="Palm C.J."/>
            <person name="Southwick A.M."/>
            <person name="Wu H.C."/>
            <person name="Kim C.J."/>
            <person name="Nguyen M."/>
            <person name="Pham P.K."/>
            <person name="Cheuk R.F."/>
            <person name="Karlin-Newmann G."/>
            <person name="Liu S.X."/>
            <person name="Lam B."/>
            <person name="Sakano H."/>
            <person name="Wu T."/>
            <person name="Yu G."/>
            <person name="Miranda M."/>
            <person name="Quach H.L."/>
            <person name="Tripp M."/>
            <person name="Chang C.H."/>
            <person name="Lee J.M."/>
            <person name="Toriumi M.J."/>
            <person name="Chan M.M."/>
            <person name="Tang C.C."/>
            <person name="Onodera C.S."/>
            <person name="Deng J.M."/>
            <person name="Akiyama K."/>
            <person name="Ansari Y."/>
            <person name="Arakawa T."/>
            <person name="Banh J."/>
            <person name="Banno F."/>
            <person name="Bowser L."/>
            <person name="Brooks S.Y."/>
            <person name="Carninci P."/>
            <person name="Chao Q."/>
            <person name="Choy N."/>
            <person name="Enju A."/>
            <person name="Goldsmith A.D."/>
            <person name="Gurjal M."/>
            <person name="Hansen N.F."/>
            <person name="Hayashizaki Y."/>
            <person name="Johnson-Hopson C."/>
            <person name="Hsuan V.W."/>
            <person name="Iida K."/>
            <person name="Karnes M."/>
            <person name="Khan S."/>
            <person name="Koesema E."/>
            <person name="Ishida J."/>
            <person name="Jiang P.X."/>
            <person name="Jones T."/>
            <person name="Kawai J."/>
            <person name="Kamiya A."/>
            <person name="Meyers C."/>
            <person name="Nakajima M."/>
            <person name="Narusaka M."/>
            <person name="Seki M."/>
            <person name="Sakurai T."/>
            <person name="Satou M."/>
            <person name="Tamse R."/>
            <person name="Vaysberg M."/>
            <person name="Wallender E.K."/>
            <person name="Wong C."/>
            <person name="Yamamura Y."/>
            <person name="Yuan S."/>
            <person name="Shinozaki K."/>
            <person name="Davis R.W."/>
            <person name="Theologis A."/>
            <person name="Ecker J.R."/>
        </authorList>
    </citation>
    <scope>NUCLEOTIDE SEQUENCE [LARGE SCALE MRNA]</scope>
    <source>
        <strain>cv. Columbia</strain>
    </source>
</reference>
<sequence length="539" mass="60555">MEFECQERLEAANDQRSESGLLNTDLRIGNDGSVEIPNVKLCCQKKKGTLVPSGSKQLLSDKDLSTTIIDLPQALISEILNCLDPKELGLVSCVSTYLHRLASEHHAWKEFYRERWGLPVVFGAASSGLSDERSWKDLFVEREFRSRTFLGRYSIDTLYGHTEAVRTVFLLASAKLVFTSGYDSIVRMWDMEEGLSIAASKPLGCTIRALAADTKLLVAGGTDGFIHCWKSLDGLRNLFDLTGFQKEKTEFRLWGHEGPITSLALDMTSIFSGSWDMSVRIWDRSSMKCVKTLRHSDWVWGLAPHETTLASTSGSDVYIWDVSSETPLAIIPDAHEGTTYSLARSHTGDFLFTGGEDGGIKMFEIRRYGSETSVVLISQWMPHTSPVYSLSFEFPWLVSASGDGKLALIDVRKLLKTNRCAYSKRISSSTVEPPQRMLHGFGSNLFSVDVGYDRIVCGGEEGTVRIWNFTQALEIERRTRALKGMRHENRMRRRRMQMEMNAKNGRPDQCSIAAHKNPINGERNRAWHSKRRASGKAKA</sequence>
<keyword id="KW-1185">Reference proteome</keyword>
<keyword id="KW-0677">Repeat</keyword>
<keyword id="KW-0853">WD repeat</keyword>
<feature type="chain" id="PRO_0000281989" description="F-box/WD-40 repeat-containing protein At5g21040">
    <location>
        <begin position="1"/>
        <end position="539"/>
    </location>
</feature>
<feature type="domain" description="F-box" evidence="1">
    <location>
        <begin position="65"/>
        <end position="111"/>
    </location>
</feature>
<feature type="repeat" description="WD 1">
    <location>
        <begin position="160"/>
        <end position="199"/>
    </location>
</feature>
<feature type="repeat" description="WD 2">
    <location>
        <begin position="201"/>
        <end position="239"/>
    </location>
</feature>
<feature type="repeat" description="WD 3">
    <location>
        <begin position="255"/>
        <end position="292"/>
    </location>
</feature>
<feature type="repeat" description="WD 4">
    <location>
        <begin position="294"/>
        <end position="330"/>
    </location>
</feature>
<feature type="repeat" description="WD 5">
    <location>
        <begin position="334"/>
        <end position="373"/>
    </location>
</feature>
<feature type="repeat" description="WD 6">
    <location>
        <begin position="382"/>
        <end position="419"/>
    </location>
</feature>
<feature type="repeat" description="WD 7">
    <location>
        <begin position="433"/>
        <end position="477"/>
    </location>
</feature>
<feature type="region of interest" description="Disordered" evidence="2">
    <location>
        <begin position="505"/>
        <end position="539"/>
    </location>
</feature>
<feature type="compositionally biased region" description="Basic residues" evidence="2">
    <location>
        <begin position="526"/>
        <end position="539"/>
    </location>
</feature>
<dbReference type="EMBL" id="AF296834">
    <property type="status" value="NOT_ANNOTATED_CDS"/>
    <property type="molecule type" value="Genomic_DNA"/>
</dbReference>
<dbReference type="EMBL" id="CP002688">
    <property type="protein sequence ID" value="AED92922.1"/>
    <property type="molecule type" value="Genomic_DNA"/>
</dbReference>
<dbReference type="EMBL" id="CP002688">
    <property type="protein sequence ID" value="AED92923.1"/>
    <property type="molecule type" value="Genomic_DNA"/>
</dbReference>
<dbReference type="EMBL" id="CP002688">
    <property type="protein sequence ID" value="ANM69782.1"/>
    <property type="molecule type" value="Genomic_DNA"/>
</dbReference>
<dbReference type="EMBL" id="AY048254">
    <property type="protein sequence ID" value="AAK82516.1"/>
    <property type="molecule type" value="mRNA"/>
</dbReference>
<dbReference type="EMBL" id="BT002693">
    <property type="protein sequence ID" value="AAO11609.1"/>
    <property type="molecule type" value="mRNA"/>
</dbReference>
<dbReference type="SMR" id="Q94AD8"/>
<dbReference type="BioGRID" id="17503">
    <property type="interactions" value="7"/>
</dbReference>
<dbReference type="FunCoup" id="Q94AD8">
    <property type="interactions" value="866"/>
</dbReference>
<dbReference type="STRING" id="3702.Q94AD8"/>
<dbReference type="iPTMnet" id="Q94AD8"/>
<dbReference type="PaxDb" id="3702-AT5G21040.2"/>
<dbReference type="ProteomicsDB" id="231001"/>
<dbReference type="EnsemblPlants" id="AT5G21040.1">
    <property type="protein sequence ID" value="AT5G21040.1"/>
    <property type="gene ID" value="AT5G21040"/>
</dbReference>
<dbReference type="EnsemblPlants" id="AT5G21040.2">
    <property type="protein sequence ID" value="AT5G21040.2"/>
    <property type="gene ID" value="AT5G21040"/>
</dbReference>
<dbReference type="EnsemblPlants" id="AT5G21040.3">
    <property type="protein sequence ID" value="AT5G21040.3"/>
    <property type="gene ID" value="AT5G21040"/>
</dbReference>
<dbReference type="Gramene" id="AT5G21040.1">
    <property type="protein sequence ID" value="AT5G21040.1"/>
    <property type="gene ID" value="AT5G21040"/>
</dbReference>
<dbReference type="Gramene" id="AT5G21040.2">
    <property type="protein sequence ID" value="AT5G21040.2"/>
    <property type="gene ID" value="AT5G21040"/>
</dbReference>
<dbReference type="Gramene" id="AT5G21040.3">
    <property type="protein sequence ID" value="AT5G21040.3"/>
    <property type="gene ID" value="AT5G21040"/>
</dbReference>
<dbReference type="KEGG" id="ath:AT5G21040"/>
<dbReference type="Araport" id="AT5G21040"/>
<dbReference type="TAIR" id="AT5G21040">
    <property type="gene designation" value="FBX2"/>
</dbReference>
<dbReference type="eggNOG" id="KOG0274">
    <property type="taxonomic scope" value="Eukaryota"/>
</dbReference>
<dbReference type="HOGENOM" id="CLU_486989_0_0_1"/>
<dbReference type="InParanoid" id="Q94AD8"/>
<dbReference type="OMA" id="FRVWEHE"/>
<dbReference type="OrthoDB" id="190105at2759"/>
<dbReference type="PhylomeDB" id="Q94AD8"/>
<dbReference type="PRO" id="PR:Q94AD8"/>
<dbReference type="Proteomes" id="UP000006548">
    <property type="component" value="Chromosome 5"/>
</dbReference>
<dbReference type="ExpressionAtlas" id="Q94AD8">
    <property type="expression patterns" value="baseline and differential"/>
</dbReference>
<dbReference type="GO" id="GO:0005737">
    <property type="term" value="C:cytoplasm"/>
    <property type="evidence" value="ECO:0000314"/>
    <property type="project" value="TAIR"/>
</dbReference>
<dbReference type="GO" id="GO:0005634">
    <property type="term" value="C:nucleus"/>
    <property type="evidence" value="ECO:0000314"/>
    <property type="project" value="TAIR"/>
</dbReference>
<dbReference type="GO" id="GO:0016036">
    <property type="term" value="P:cellular response to phosphate starvation"/>
    <property type="evidence" value="ECO:0000315"/>
    <property type="project" value="TAIR"/>
</dbReference>
<dbReference type="CDD" id="cd09917">
    <property type="entry name" value="F-box_SF"/>
    <property type="match status" value="1"/>
</dbReference>
<dbReference type="CDD" id="cd00200">
    <property type="entry name" value="WD40"/>
    <property type="match status" value="1"/>
</dbReference>
<dbReference type="FunFam" id="2.130.10.10:FF:002532">
    <property type="entry name" value="F-box/WD-40 repeat-containing protein At5g21040"/>
    <property type="match status" value="1"/>
</dbReference>
<dbReference type="FunFam" id="2.130.10.10:FF:002533">
    <property type="entry name" value="F-box/WD-40 repeat-containing protein At5g21040"/>
    <property type="match status" value="1"/>
</dbReference>
<dbReference type="FunFam" id="1.20.1280.50:FF:000058">
    <property type="entry name" value="OSJNBa0058K23.14 protein"/>
    <property type="match status" value="1"/>
</dbReference>
<dbReference type="Gene3D" id="1.20.1280.50">
    <property type="match status" value="1"/>
</dbReference>
<dbReference type="Gene3D" id="2.130.10.10">
    <property type="entry name" value="YVTN repeat-like/Quinoprotein amine dehydrogenase"/>
    <property type="match status" value="2"/>
</dbReference>
<dbReference type="InterPro" id="IPR036047">
    <property type="entry name" value="F-box-like_dom_sf"/>
</dbReference>
<dbReference type="InterPro" id="IPR001810">
    <property type="entry name" value="F-box_dom"/>
</dbReference>
<dbReference type="InterPro" id="IPR020472">
    <property type="entry name" value="G-protein_beta_WD-40_rep"/>
</dbReference>
<dbReference type="InterPro" id="IPR015943">
    <property type="entry name" value="WD40/YVTN_repeat-like_dom_sf"/>
</dbReference>
<dbReference type="InterPro" id="IPR019775">
    <property type="entry name" value="WD40_repeat_CS"/>
</dbReference>
<dbReference type="InterPro" id="IPR036322">
    <property type="entry name" value="WD40_repeat_dom_sf"/>
</dbReference>
<dbReference type="InterPro" id="IPR001680">
    <property type="entry name" value="WD40_rpt"/>
</dbReference>
<dbReference type="PANTHER" id="PTHR19855:SF19">
    <property type="entry name" value="OS04G0619700 PROTEIN"/>
    <property type="match status" value="1"/>
</dbReference>
<dbReference type="PANTHER" id="PTHR19855">
    <property type="entry name" value="WD40 REPEAT PROTEIN 12, 37"/>
    <property type="match status" value="1"/>
</dbReference>
<dbReference type="Pfam" id="PF12937">
    <property type="entry name" value="F-box-like"/>
    <property type="match status" value="1"/>
</dbReference>
<dbReference type="Pfam" id="PF00400">
    <property type="entry name" value="WD40"/>
    <property type="match status" value="5"/>
</dbReference>
<dbReference type="PRINTS" id="PR00320">
    <property type="entry name" value="GPROTEINBRPT"/>
</dbReference>
<dbReference type="SMART" id="SM00256">
    <property type="entry name" value="FBOX"/>
    <property type="match status" value="1"/>
</dbReference>
<dbReference type="SMART" id="SM00320">
    <property type="entry name" value="WD40"/>
    <property type="match status" value="7"/>
</dbReference>
<dbReference type="SUPFAM" id="SSF81383">
    <property type="entry name" value="F-box domain"/>
    <property type="match status" value="1"/>
</dbReference>
<dbReference type="SUPFAM" id="SSF50978">
    <property type="entry name" value="WD40 repeat-like"/>
    <property type="match status" value="1"/>
</dbReference>
<dbReference type="PROSITE" id="PS50181">
    <property type="entry name" value="FBOX"/>
    <property type="match status" value="1"/>
</dbReference>
<dbReference type="PROSITE" id="PS00678">
    <property type="entry name" value="WD_REPEATS_1"/>
    <property type="match status" value="1"/>
</dbReference>
<dbReference type="PROSITE" id="PS50082">
    <property type="entry name" value="WD_REPEATS_2"/>
    <property type="match status" value="3"/>
</dbReference>
<dbReference type="PROSITE" id="PS50294">
    <property type="entry name" value="WD_REPEATS_REGION"/>
    <property type="match status" value="1"/>
</dbReference>
<proteinExistence type="evidence at transcript level"/>
<evidence type="ECO:0000255" key="1">
    <source>
        <dbReference type="PROSITE-ProRule" id="PRU00080"/>
    </source>
</evidence>
<evidence type="ECO:0000256" key="2">
    <source>
        <dbReference type="SAM" id="MobiDB-lite"/>
    </source>
</evidence>